<comment type="function">
    <text evidence="1">Extracellular serine carboxypeptidase that contributes to pathogenicity.</text>
</comment>
<comment type="catalytic activity">
    <reaction>
        <text>Preferential release of a C-terminal arginine or lysine residue.</text>
        <dbReference type="EC" id="3.4.16.6"/>
    </reaction>
</comment>
<comment type="subcellular location">
    <subcellularLocation>
        <location evidence="4">Cell membrane</location>
        <topology evidence="4">Lipid-anchor</topology>
        <topology evidence="4">GPI-anchor</topology>
    </subcellularLocation>
</comment>
<comment type="similarity">
    <text evidence="4">Belongs to the peptidase S10 family.</text>
</comment>
<feature type="signal peptide" evidence="2">
    <location>
        <begin position="1"/>
        <end position="21"/>
    </location>
</feature>
<feature type="chain" id="PRO_0000384121" description="Carboxypeptidase S1 homolog B">
    <location>
        <begin position="22"/>
        <end position="631"/>
    </location>
</feature>
<feature type="propeptide" id="PRO_0000384122" description="Removed in mature form" evidence="2">
    <location>
        <begin position="632"/>
        <end position="655"/>
    </location>
</feature>
<feature type="active site" evidence="3">
    <location>
        <position position="240"/>
    </location>
</feature>
<feature type="active site" evidence="3">
    <location>
        <position position="459"/>
    </location>
</feature>
<feature type="active site" evidence="3">
    <location>
        <position position="517"/>
    </location>
</feature>
<feature type="binding site" evidence="1">
    <location>
        <position position="462"/>
    </location>
    <ligand>
        <name>substrate</name>
    </ligand>
</feature>
<feature type="binding site" evidence="1">
    <location>
        <position position="518"/>
    </location>
    <ligand>
        <name>substrate</name>
    </ligand>
</feature>
<feature type="lipid moiety-binding region" description="GPI-anchor amidated glycine" evidence="2">
    <location>
        <position position="631"/>
    </location>
</feature>
<feature type="glycosylation site" description="N-linked (GlcNAc...) asparagine" evidence="2">
    <location>
        <position position="130"/>
    </location>
</feature>
<feature type="glycosylation site" description="N-linked (GlcNAc...) asparagine" evidence="2">
    <location>
        <position position="163"/>
    </location>
</feature>
<feature type="glycosylation site" description="N-linked (GlcNAc...) asparagine" evidence="2">
    <location>
        <position position="186"/>
    </location>
</feature>
<feature type="glycosylation site" description="N-linked (GlcNAc...) asparagine" evidence="2">
    <location>
        <position position="266"/>
    </location>
</feature>
<feature type="glycosylation site" description="N-linked (GlcNAc...) asparagine" evidence="2">
    <location>
        <position position="302"/>
    </location>
</feature>
<feature type="glycosylation site" description="N-linked (GlcNAc...) asparagine" evidence="2">
    <location>
        <position position="311"/>
    </location>
</feature>
<feature type="glycosylation site" description="N-linked (GlcNAc...) asparagine" evidence="2">
    <location>
        <position position="414"/>
    </location>
</feature>
<feature type="glycosylation site" description="N-linked (GlcNAc...) asparagine" evidence="2">
    <location>
        <position position="475"/>
    </location>
</feature>
<feature type="glycosylation site" description="N-linked (GlcNAc...) asparagine" evidence="2">
    <location>
        <position position="493"/>
    </location>
</feature>
<feature type="glycosylation site" description="N-linked (GlcNAc...) asparagine" evidence="2">
    <location>
        <position position="506"/>
    </location>
</feature>
<feature type="glycosylation site" description="N-linked (GlcNAc...) asparagine" evidence="2">
    <location>
        <position position="598"/>
    </location>
</feature>
<feature type="glycosylation site" description="N-linked (GlcNAc...) asparagine" evidence="2">
    <location>
        <position position="612"/>
    </location>
</feature>
<feature type="disulfide bond" evidence="1">
    <location>
        <begin position="51"/>
        <end position="123"/>
    </location>
</feature>
<feature type="disulfide bond" evidence="1">
    <location>
        <begin position="328"/>
        <end position="364"/>
    </location>
</feature>
<feature type="disulfide bond" evidence="1">
    <location>
        <begin position="335"/>
        <end position="357"/>
    </location>
</feature>
<organism>
    <name type="scientific">Arthroderma otae (strain ATCC MYA-4605 / CBS 113480)</name>
    <name type="common">Microsporum canis</name>
    <dbReference type="NCBI Taxonomy" id="554155"/>
    <lineage>
        <taxon>Eukaryota</taxon>
        <taxon>Fungi</taxon>
        <taxon>Dikarya</taxon>
        <taxon>Ascomycota</taxon>
        <taxon>Pezizomycotina</taxon>
        <taxon>Eurotiomycetes</taxon>
        <taxon>Eurotiomycetidae</taxon>
        <taxon>Onygenales</taxon>
        <taxon>Arthrodermataceae</taxon>
        <taxon>Microsporum</taxon>
    </lineage>
</organism>
<gene>
    <name type="primary">SCPB</name>
    <name type="ORF">MCYG_02825</name>
</gene>
<name>SCPB_ARTOC</name>
<proteinExistence type="inferred from homology"/>
<accession>C5FGX1</accession>
<sequence length="655" mass="72791">MRPFARAALCLLAAAGHLAQAQFPPRPEGVTVLESKFGGGARISYKEPGLCETTEGVKSYAGYVHLPPGTLKDLGVEQDYPINTFFWFFEARKDPENAPLSIWMNGGPGSSSMFGMMTENGPCFVNPDSNSTRLNPHSWNNEVNMLYLDQPVQVGLSYDTLANFTRNLVTDEITKLEPGDPIPEQNATFLVGTYASRNMDTTAKGTRNAAIALWHFAQVWFQEFPGYHPRDSRISIATESYGGRYGPAFTAFFEEQNQKIKDGTWNGSEGNRHVLHLDTLMIVNGCIDRLVQWPAYPQMAYNNTYSIEAVNASIHEGMLDALYREGGCRDKINHCRSISAVSDPENIGINAMVNDVCKDAETFCSTEVRDPYQEFSGRNYYDIGQLDPSPFPAPFYMAWLNQPHVQAALGVPLNWTQSNDVVTTAFRAIGDYPRPGWLEDLAYLLENGIKVSLVYGDRDYACNWFGGELSSLAINYTDTQNFHNAGYAGIQVNSSYIGGQVRQYGNLSFSRVYEAGHEVPSYQPETALQIFHRALFNKDIATGTIDTSSRREDGKFYGSSGPSDSFVFKNEPPPQHVHFCHILDTSTCTKEQIESVENGTAVVRSWIVVDSNSTSLFPEVVGSAEPTPMPGAALVSGRIKFHVHVIKSFDYYIFI</sequence>
<dbReference type="EC" id="3.4.16.6"/>
<dbReference type="EMBL" id="DS995702">
    <property type="protein sequence ID" value="EEQ30006.1"/>
    <property type="molecule type" value="Genomic_DNA"/>
</dbReference>
<dbReference type="RefSeq" id="XP_002849891.1">
    <property type="nucleotide sequence ID" value="XM_002849845.1"/>
</dbReference>
<dbReference type="SMR" id="C5FGX1"/>
<dbReference type="STRING" id="554155.C5FGX1"/>
<dbReference type="ESTHER" id="artoc-scpb">
    <property type="family name" value="Carboxypeptidase_S10"/>
</dbReference>
<dbReference type="MEROPS" id="S10.016"/>
<dbReference type="GlyCosmos" id="C5FGX1">
    <property type="glycosylation" value="12 sites, No reported glycans"/>
</dbReference>
<dbReference type="GeneID" id="9223265"/>
<dbReference type="VEuPathDB" id="FungiDB:MCYG_02825"/>
<dbReference type="eggNOG" id="KOG1282">
    <property type="taxonomic scope" value="Eukaryota"/>
</dbReference>
<dbReference type="HOGENOM" id="CLU_008523_10_3_1"/>
<dbReference type="OMA" id="FQEFPGY"/>
<dbReference type="OrthoDB" id="443318at2759"/>
<dbReference type="Proteomes" id="UP000002035">
    <property type="component" value="Unassembled WGS sequence"/>
</dbReference>
<dbReference type="GO" id="GO:0000324">
    <property type="term" value="C:fungal-type vacuole"/>
    <property type="evidence" value="ECO:0007669"/>
    <property type="project" value="TreeGrafter"/>
</dbReference>
<dbReference type="GO" id="GO:0005886">
    <property type="term" value="C:plasma membrane"/>
    <property type="evidence" value="ECO:0007669"/>
    <property type="project" value="UniProtKB-SubCell"/>
</dbReference>
<dbReference type="GO" id="GO:0098552">
    <property type="term" value="C:side of membrane"/>
    <property type="evidence" value="ECO:0007669"/>
    <property type="project" value="UniProtKB-KW"/>
</dbReference>
<dbReference type="GO" id="GO:0004185">
    <property type="term" value="F:serine-type carboxypeptidase activity"/>
    <property type="evidence" value="ECO:0007669"/>
    <property type="project" value="UniProtKB-EC"/>
</dbReference>
<dbReference type="GO" id="GO:0006508">
    <property type="term" value="P:proteolysis"/>
    <property type="evidence" value="ECO:0007669"/>
    <property type="project" value="UniProtKB-KW"/>
</dbReference>
<dbReference type="Gene3D" id="3.40.50.1820">
    <property type="entry name" value="alpha/beta hydrolase"/>
    <property type="match status" value="1"/>
</dbReference>
<dbReference type="InterPro" id="IPR029058">
    <property type="entry name" value="AB_hydrolase_fold"/>
</dbReference>
<dbReference type="InterPro" id="IPR001563">
    <property type="entry name" value="Peptidase_S10"/>
</dbReference>
<dbReference type="InterPro" id="IPR018202">
    <property type="entry name" value="Ser_caboxypep_ser_AS"/>
</dbReference>
<dbReference type="PANTHER" id="PTHR11802:SF189">
    <property type="entry name" value="CARBOXYPEPTIDASE"/>
    <property type="match status" value="1"/>
</dbReference>
<dbReference type="PANTHER" id="PTHR11802">
    <property type="entry name" value="SERINE PROTEASE FAMILY S10 SERINE CARBOXYPEPTIDASE"/>
    <property type="match status" value="1"/>
</dbReference>
<dbReference type="Pfam" id="PF00450">
    <property type="entry name" value="Peptidase_S10"/>
    <property type="match status" value="1"/>
</dbReference>
<dbReference type="PRINTS" id="PR00724">
    <property type="entry name" value="CRBOXYPTASEC"/>
</dbReference>
<dbReference type="SUPFAM" id="SSF53474">
    <property type="entry name" value="alpha/beta-Hydrolases"/>
    <property type="match status" value="1"/>
</dbReference>
<dbReference type="PROSITE" id="PS00131">
    <property type="entry name" value="CARBOXYPEPT_SER_SER"/>
    <property type="match status" value="1"/>
</dbReference>
<reference key="1">
    <citation type="journal article" date="2012" name="MBio">
        <title>Comparative genome analysis of Trichophyton rubrum and related dermatophytes reveals candidate genes involved in infection.</title>
        <authorList>
            <person name="Martinez D.A."/>
            <person name="Oliver B.G."/>
            <person name="Graeser Y."/>
            <person name="Goldberg J.M."/>
            <person name="Li W."/>
            <person name="Martinez-Rossi N.M."/>
            <person name="Monod M."/>
            <person name="Shelest E."/>
            <person name="Barton R.C."/>
            <person name="Birch E."/>
            <person name="Brakhage A.A."/>
            <person name="Chen Z."/>
            <person name="Gurr S.J."/>
            <person name="Heiman D."/>
            <person name="Heitman J."/>
            <person name="Kosti I."/>
            <person name="Rossi A."/>
            <person name="Saif S."/>
            <person name="Samalova M."/>
            <person name="Saunders C.W."/>
            <person name="Shea T."/>
            <person name="Summerbell R.C."/>
            <person name="Xu J."/>
            <person name="Young S."/>
            <person name="Zeng Q."/>
            <person name="Birren B.W."/>
            <person name="Cuomo C.A."/>
            <person name="White T.C."/>
        </authorList>
    </citation>
    <scope>NUCLEOTIDE SEQUENCE [LARGE SCALE GENOMIC DNA]</scope>
    <source>
        <strain>ATCC MYA-4605 / CBS 113480</strain>
    </source>
</reference>
<protein>
    <recommendedName>
        <fullName>Carboxypeptidase S1 homolog B</fullName>
        <ecNumber>3.4.16.6</ecNumber>
    </recommendedName>
    <alternativeName>
        <fullName>Serine carboxypeptidase B</fullName>
        <shortName>SPCB</shortName>
    </alternativeName>
</protein>
<evidence type="ECO:0000250" key="1"/>
<evidence type="ECO:0000255" key="2"/>
<evidence type="ECO:0000255" key="3">
    <source>
        <dbReference type="PROSITE-ProRule" id="PRU10074"/>
    </source>
</evidence>
<evidence type="ECO:0000305" key="4"/>
<keyword id="KW-0121">Carboxypeptidase</keyword>
<keyword id="KW-1003">Cell membrane</keyword>
<keyword id="KW-1015">Disulfide bond</keyword>
<keyword id="KW-0325">Glycoprotein</keyword>
<keyword id="KW-0336">GPI-anchor</keyword>
<keyword id="KW-0378">Hydrolase</keyword>
<keyword id="KW-0449">Lipoprotein</keyword>
<keyword id="KW-0472">Membrane</keyword>
<keyword id="KW-0645">Protease</keyword>
<keyword id="KW-1185">Reference proteome</keyword>
<keyword id="KW-0732">Signal</keyword>
<keyword id="KW-0843">Virulence</keyword>